<accession>A1QYH8</accession>
<protein>
    <recommendedName>
        <fullName evidence="1">Probable transcriptional regulatory protein BT0025</fullName>
    </recommendedName>
</protein>
<feature type="chain" id="PRO_1000200080" description="Probable transcriptional regulatory protein BT0025">
    <location>
        <begin position="1"/>
        <end position="244"/>
    </location>
</feature>
<name>Y025_BORT9</name>
<organism>
    <name type="scientific">Borrelia turicatae (strain 91E135)</name>
    <dbReference type="NCBI Taxonomy" id="314724"/>
    <lineage>
        <taxon>Bacteria</taxon>
        <taxon>Pseudomonadati</taxon>
        <taxon>Spirochaetota</taxon>
        <taxon>Spirochaetia</taxon>
        <taxon>Spirochaetales</taxon>
        <taxon>Borreliaceae</taxon>
        <taxon>Borrelia</taxon>
    </lineage>
</organism>
<comment type="subcellular location">
    <subcellularLocation>
        <location evidence="1">Cytoplasm</location>
    </subcellularLocation>
</comment>
<comment type="similarity">
    <text evidence="1">Belongs to the TACO1 family.</text>
</comment>
<gene>
    <name type="ordered locus">BT0025</name>
</gene>
<keyword id="KW-0963">Cytoplasm</keyword>
<keyword id="KW-0238">DNA-binding</keyword>
<keyword id="KW-1185">Reference proteome</keyword>
<keyword id="KW-0804">Transcription</keyword>
<keyword id="KW-0805">Transcription regulation</keyword>
<sequence>MSGHSKWSTIKRKKGALDAKRNKIFTKLIREISIAAKMGGGDIESNSRLRLAVNKARVSNMPKDNIEKAIKKGSGDDNIGSEYFELTYEAYAPHGVALIIKCLTDNKNRTASEVRSVLSKSGGSLGAPGSVSYMFHKKGLISYSLDKYPEDEIIELALEAGAEDIYSEGSQIEVITSAENFEAISSFLRTKFEEDIAEIALIPGNKLSLNKEQMDKVLALIEKLEDFDDVQEVVHNLEIIDEIN</sequence>
<reference key="1">
    <citation type="submission" date="2004-12" db="EMBL/GenBank/DDBJ databases">
        <title>The genome sequence of Borrelia hermsii and Borrelia turicatae: comparative analysis of two agents of endemic N. America relapsing fever.</title>
        <authorList>
            <person name="Porcella S.F."/>
            <person name="Raffel S.J."/>
            <person name="Schrumpf M.E."/>
            <person name="Montgomery B."/>
            <person name="Smith T."/>
            <person name="Schwan T.G."/>
        </authorList>
    </citation>
    <scope>NUCLEOTIDE SEQUENCE [LARGE SCALE GENOMIC DNA]</scope>
    <source>
        <strain>91E135</strain>
    </source>
</reference>
<evidence type="ECO:0000255" key="1">
    <source>
        <dbReference type="HAMAP-Rule" id="MF_00693"/>
    </source>
</evidence>
<dbReference type="EMBL" id="CP000049">
    <property type="protein sequence ID" value="AAX17370.1"/>
    <property type="molecule type" value="Genomic_DNA"/>
</dbReference>
<dbReference type="RefSeq" id="WP_011771989.1">
    <property type="nucleotide sequence ID" value="NC_008710.1"/>
</dbReference>
<dbReference type="SMR" id="A1QYH8"/>
<dbReference type="KEGG" id="btu:BT0025"/>
<dbReference type="eggNOG" id="COG0217">
    <property type="taxonomic scope" value="Bacteria"/>
</dbReference>
<dbReference type="HOGENOM" id="CLU_062974_2_2_12"/>
<dbReference type="Proteomes" id="UP000001205">
    <property type="component" value="Chromosome"/>
</dbReference>
<dbReference type="GO" id="GO:0005829">
    <property type="term" value="C:cytosol"/>
    <property type="evidence" value="ECO:0007669"/>
    <property type="project" value="TreeGrafter"/>
</dbReference>
<dbReference type="GO" id="GO:0003677">
    <property type="term" value="F:DNA binding"/>
    <property type="evidence" value="ECO:0007669"/>
    <property type="project" value="UniProtKB-UniRule"/>
</dbReference>
<dbReference type="GO" id="GO:0006355">
    <property type="term" value="P:regulation of DNA-templated transcription"/>
    <property type="evidence" value="ECO:0007669"/>
    <property type="project" value="UniProtKB-UniRule"/>
</dbReference>
<dbReference type="FunFam" id="1.10.10.200:FF:000002">
    <property type="entry name" value="Probable transcriptional regulatory protein CLM62_37755"/>
    <property type="match status" value="1"/>
</dbReference>
<dbReference type="Gene3D" id="1.10.10.200">
    <property type="match status" value="1"/>
</dbReference>
<dbReference type="Gene3D" id="3.30.70.980">
    <property type="match status" value="2"/>
</dbReference>
<dbReference type="HAMAP" id="MF_00693">
    <property type="entry name" value="Transcrip_reg_TACO1"/>
    <property type="match status" value="1"/>
</dbReference>
<dbReference type="InterPro" id="IPR017856">
    <property type="entry name" value="Integrase-like_N"/>
</dbReference>
<dbReference type="InterPro" id="IPR048300">
    <property type="entry name" value="TACO1_YebC-like_2nd/3rd_dom"/>
</dbReference>
<dbReference type="InterPro" id="IPR049083">
    <property type="entry name" value="TACO1_YebC_N"/>
</dbReference>
<dbReference type="InterPro" id="IPR002876">
    <property type="entry name" value="Transcrip_reg_TACO1-like"/>
</dbReference>
<dbReference type="InterPro" id="IPR026564">
    <property type="entry name" value="Transcrip_reg_TACO1-like_dom3"/>
</dbReference>
<dbReference type="InterPro" id="IPR029072">
    <property type="entry name" value="YebC-like"/>
</dbReference>
<dbReference type="NCBIfam" id="NF001030">
    <property type="entry name" value="PRK00110.1"/>
    <property type="match status" value="1"/>
</dbReference>
<dbReference type="NCBIfam" id="NF009044">
    <property type="entry name" value="PRK12378.1"/>
    <property type="match status" value="1"/>
</dbReference>
<dbReference type="NCBIfam" id="TIGR01033">
    <property type="entry name" value="YebC/PmpR family DNA-binding transcriptional regulator"/>
    <property type="match status" value="1"/>
</dbReference>
<dbReference type="PANTHER" id="PTHR12532:SF6">
    <property type="entry name" value="TRANSCRIPTIONAL REGULATORY PROTEIN YEBC-RELATED"/>
    <property type="match status" value="1"/>
</dbReference>
<dbReference type="PANTHER" id="PTHR12532">
    <property type="entry name" value="TRANSLATIONAL ACTIVATOR OF CYTOCHROME C OXIDASE 1"/>
    <property type="match status" value="1"/>
</dbReference>
<dbReference type="Pfam" id="PF20772">
    <property type="entry name" value="TACO1_YebC_N"/>
    <property type="match status" value="1"/>
</dbReference>
<dbReference type="Pfam" id="PF01709">
    <property type="entry name" value="Transcrip_reg"/>
    <property type="match status" value="1"/>
</dbReference>
<dbReference type="SUPFAM" id="SSF75625">
    <property type="entry name" value="YebC-like"/>
    <property type="match status" value="1"/>
</dbReference>
<proteinExistence type="inferred from homology"/>